<gene>
    <name evidence="1" type="primary">rnc</name>
    <name type="ordered locus">Sfri_2929</name>
</gene>
<organism>
    <name type="scientific">Shewanella frigidimarina (strain NCIMB 400)</name>
    <dbReference type="NCBI Taxonomy" id="318167"/>
    <lineage>
        <taxon>Bacteria</taxon>
        <taxon>Pseudomonadati</taxon>
        <taxon>Pseudomonadota</taxon>
        <taxon>Gammaproteobacteria</taxon>
        <taxon>Alteromonadales</taxon>
        <taxon>Shewanellaceae</taxon>
        <taxon>Shewanella</taxon>
    </lineage>
</organism>
<proteinExistence type="inferred from homology"/>
<sequence length="226" mass="25302">MEPIKNLPRLCRTLGYEFNNIELLIQALTHRSAANKHNERLEFLGDSILSIAISDALYHQFPKATEGDLSRMRATLVKGDTLTIIAKEFKLGDYLYLGPGELKSGGFRRESILADAVEAIIGAVYLDADIEVCRKLLLSWYQERLAEIKPGINQKDPKTILQEYLQGFKKPLPDYQVVAVEGEAHDQTFTVECKISELDKVVTGVASSRRKAEQLAAAQVLELLNK</sequence>
<evidence type="ECO:0000255" key="1">
    <source>
        <dbReference type="HAMAP-Rule" id="MF_00104"/>
    </source>
</evidence>
<keyword id="KW-0963">Cytoplasm</keyword>
<keyword id="KW-0255">Endonuclease</keyword>
<keyword id="KW-0378">Hydrolase</keyword>
<keyword id="KW-0460">Magnesium</keyword>
<keyword id="KW-0479">Metal-binding</keyword>
<keyword id="KW-0507">mRNA processing</keyword>
<keyword id="KW-0540">Nuclease</keyword>
<keyword id="KW-1185">Reference proteome</keyword>
<keyword id="KW-0694">RNA-binding</keyword>
<keyword id="KW-0698">rRNA processing</keyword>
<keyword id="KW-0699">rRNA-binding</keyword>
<keyword id="KW-0819">tRNA processing</keyword>
<protein>
    <recommendedName>
        <fullName evidence="1">Ribonuclease 3</fullName>
        <ecNumber evidence="1">3.1.26.3</ecNumber>
    </recommendedName>
    <alternativeName>
        <fullName evidence="1">Ribonuclease III</fullName>
        <shortName evidence="1">RNase III</shortName>
    </alternativeName>
</protein>
<comment type="function">
    <text evidence="1">Digests double-stranded RNA. Involved in the processing of primary rRNA transcript to yield the immediate precursors to the large and small rRNAs (23S and 16S). Processes some mRNAs, and tRNAs when they are encoded in the rRNA operon. Processes pre-crRNA and tracrRNA of type II CRISPR loci if present in the organism.</text>
</comment>
<comment type="catalytic activity">
    <reaction evidence="1">
        <text>Endonucleolytic cleavage to 5'-phosphomonoester.</text>
        <dbReference type="EC" id="3.1.26.3"/>
    </reaction>
</comment>
<comment type="cofactor">
    <cofactor evidence="1">
        <name>Mg(2+)</name>
        <dbReference type="ChEBI" id="CHEBI:18420"/>
    </cofactor>
</comment>
<comment type="subunit">
    <text evidence="1">Homodimer.</text>
</comment>
<comment type="subcellular location">
    <subcellularLocation>
        <location evidence="1">Cytoplasm</location>
    </subcellularLocation>
</comment>
<comment type="similarity">
    <text evidence="1">Belongs to the ribonuclease III family.</text>
</comment>
<feature type="chain" id="PRO_1000075812" description="Ribonuclease 3">
    <location>
        <begin position="1"/>
        <end position="226"/>
    </location>
</feature>
<feature type="domain" description="RNase III" evidence="1">
    <location>
        <begin position="7"/>
        <end position="129"/>
    </location>
</feature>
<feature type="domain" description="DRBM" evidence="1">
    <location>
        <begin position="156"/>
        <end position="226"/>
    </location>
</feature>
<feature type="active site" evidence="1">
    <location>
        <position position="46"/>
    </location>
</feature>
<feature type="active site" evidence="1">
    <location>
        <position position="118"/>
    </location>
</feature>
<feature type="binding site" evidence="1">
    <location>
        <position position="42"/>
    </location>
    <ligand>
        <name>Mg(2+)</name>
        <dbReference type="ChEBI" id="CHEBI:18420"/>
    </ligand>
</feature>
<feature type="binding site" evidence="1">
    <location>
        <position position="115"/>
    </location>
    <ligand>
        <name>Mg(2+)</name>
        <dbReference type="ChEBI" id="CHEBI:18420"/>
    </ligand>
</feature>
<feature type="binding site" evidence="1">
    <location>
        <position position="118"/>
    </location>
    <ligand>
        <name>Mg(2+)</name>
        <dbReference type="ChEBI" id="CHEBI:18420"/>
    </ligand>
</feature>
<dbReference type="EC" id="3.1.26.3" evidence="1"/>
<dbReference type="EMBL" id="CP000447">
    <property type="protein sequence ID" value="ABI72768.1"/>
    <property type="molecule type" value="Genomic_DNA"/>
</dbReference>
<dbReference type="RefSeq" id="WP_011638377.1">
    <property type="nucleotide sequence ID" value="NC_008345.1"/>
</dbReference>
<dbReference type="SMR" id="Q07YZ6"/>
<dbReference type="STRING" id="318167.Sfri_2929"/>
<dbReference type="KEGG" id="sfr:Sfri_2929"/>
<dbReference type="eggNOG" id="COG0571">
    <property type="taxonomic scope" value="Bacteria"/>
</dbReference>
<dbReference type="HOGENOM" id="CLU_000907_1_1_6"/>
<dbReference type="OrthoDB" id="9805026at2"/>
<dbReference type="Proteomes" id="UP000000684">
    <property type="component" value="Chromosome"/>
</dbReference>
<dbReference type="GO" id="GO:0005737">
    <property type="term" value="C:cytoplasm"/>
    <property type="evidence" value="ECO:0007669"/>
    <property type="project" value="UniProtKB-SubCell"/>
</dbReference>
<dbReference type="GO" id="GO:0003725">
    <property type="term" value="F:double-stranded RNA binding"/>
    <property type="evidence" value="ECO:0007669"/>
    <property type="project" value="TreeGrafter"/>
</dbReference>
<dbReference type="GO" id="GO:0046872">
    <property type="term" value="F:metal ion binding"/>
    <property type="evidence" value="ECO:0007669"/>
    <property type="project" value="UniProtKB-KW"/>
</dbReference>
<dbReference type="GO" id="GO:0004525">
    <property type="term" value="F:ribonuclease III activity"/>
    <property type="evidence" value="ECO:0007669"/>
    <property type="project" value="UniProtKB-UniRule"/>
</dbReference>
<dbReference type="GO" id="GO:0019843">
    <property type="term" value="F:rRNA binding"/>
    <property type="evidence" value="ECO:0007669"/>
    <property type="project" value="UniProtKB-KW"/>
</dbReference>
<dbReference type="GO" id="GO:0006397">
    <property type="term" value="P:mRNA processing"/>
    <property type="evidence" value="ECO:0007669"/>
    <property type="project" value="UniProtKB-UniRule"/>
</dbReference>
<dbReference type="GO" id="GO:0010468">
    <property type="term" value="P:regulation of gene expression"/>
    <property type="evidence" value="ECO:0007669"/>
    <property type="project" value="TreeGrafter"/>
</dbReference>
<dbReference type="GO" id="GO:0006364">
    <property type="term" value="P:rRNA processing"/>
    <property type="evidence" value="ECO:0007669"/>
    <property type="project" value="UniProtKB-UniRule"/>
</dbReference>
<dbReference type="GO" id="GO:0008033">
    <property type="term" value="P:tRNA processing"/>
    <property type="evidence" value="ECO:0007669"/>
    <property type="project" value="UniProtKB-KW"/>
</dbReference>
<dbReference type="CDD" id="cd10845">
    <property type="entry name" value="DSRM_RNAse_III_family"/>
    <property type="match status" value="1"/>
</dbReference>
<dbReference type="CDD" id="cd00593">
    <property type="entry name" value="RIBOc"/>
    <property type="match status" value="1"/>
</dbReference>
<dbReference type="FunFam" id="1.10.1520.10:FF:000001">
    <property type="entry name" value="Ribonuclease 3"/>
    <property type="match status" value="1"/>
</dbReference>
<dbReference type="FunFam" id="3.30.160.20:FF:000003">
    <property type="entry name" value="Ribonuclease 3"/>
    <property type="match status" value="1"/>
</dbReference>
<dbReference type="Gene3D" id="3.30.160.20">
    <property type="match status" value="1"/>
</dbReference>
<dbReference type="Gene3D" id="1.10.1520.10">
    <property type="entry name" value="Ribonuclease III domain"/>
    <property type="match status" value="1"/>
</dbReference>
<dbReference type="HAMAP" id="MF_00104">
    <property type="entry name" value="RNase_III"/>
    <property type="match status" value="1"/>
</dbReference>
<dbReference type="InterPro" id="IPR014720">
    <property type="entry name" value="dsRBD_dom"/>
</dbReference>
<dbReference type="InterPro" id="IPR011907">
    <property type="entry name" value="RNase_III"/>
</dbReference>
<dbReference type="InterPro" id="IPR000999">
    <property type="entry name" value="RNase_III_dom"/>
</dbReference>
<dbReference type="InterPro" id="IPR036389">
    <property type="entry name" value="RNase_III_sf"/>
</dbReference>
<dbReference type="NCBIfam" id="TIGR02191">
    <property type="entry name" value="RNaseIII"/>
    <property type="match status" value="1"/>
</dbReference>
<dbReference type="PANTHER" id="PTHR11207:SF0">
    <property type="entry name" value="RIBONUCLEASE 3"/>
    <property type="match status" value="1"/>
</dbReference>
<dbReference type="PANTHER" id="PTHR11207">
    <property type="entry name" value="RIBONUCLEASE III"/>
    <property type="match status" value="1"/>
</dbReference>
<dbReference type="Pfam" id="PF00035">
    <property type="entry name" value="dsrm"/>
    <property type="match status" value="1"/>
</dbReference>
<dbReference type="Pfam" id="PF14622">
    <property type="entry name" value="Ribonucleas_3_3"/>
    <property type="match status" value="1"/>
</dbReference>
<dbReference type="SMART" id="SM00358">
    <property type="entry name" value="DSRM"/>
    <property type="match status" value="1"/>
</dbReference>
<dbReference type="SMART" id="SM00535">
    <property type="entry name" value="RIBOc"/>
    <property type="match status" value="1"/>
</dbReference>
<dbReference type="SUPFAM" id="SSF54768">
    <property type="entry name" value="dsRNA-binding domain-like"/>
    <property type="match status" value="1"/>
</dbReference>
<dbReference type="SUPFAM" id="SSF69065">
    <property type="entry name" value="RNase III domain-like"/>
    <property type="match status" value="1"/>
</dbReference>
<dbReference type="PROSITE" id="PS50137">
    <property type="entry name" value="DS_RBD"/>
    <property type="match status" value="1"/>
</dbReference>
<dbReference type="PROSITE" id="PS00517">
    <property type="entry name" value="RNASE_3_1"/>
    <property type="match status" value="1"/>
</dbReference>
<dbReference type="PROSITE" id="PS50142">
    <property type="entry name" value="RNASE_3_2"/>
    <property type="match status" value="1"/>
</dbReference>
<accession>Q07YZ6</accession>
<name>RNC_SHEFN</name>
<reference key="1">
    <citation type="submission" date="2006-08" db="EMBL/GenBank/DDBJ databases">
        <title>Complete sequence of Shewanella frigidimarina NCIMB 400.</title>
        <authorList>
            <consortium name="US DOE Joint Genome Institute"/>
            <person name="Copeland A."/>
            <person name="Lucas S."/>
            <person name="Lapidus A."/>
            <person name="Barry K."/>
            <person name="Detter J.C."/>
            <person name="Glavina del Rio T."/>
            <person name="Hammon N."/>
            <person name="Israni S."/>
            <person name="Dalin E."/>
            <person name="Tice H."/>
            <person name="Pitluck S."/>
            <person name="Fredrickson J.K."/>
            <person name="Kolker E."/>
            <person name="McCuel L.A."/>
            <person name="DiChristina T."/>
            <person name="Nealson K.H."/>
            <person name="Newman D."/>
            <person name="Tiedje J.M."/>
            <person name="Zhou J."/>
            <person name="Romine M.F."/>
            <person name="Culley D.E."/>
            <person name="Serres M."/>
            <person name="Chertkov O."/>
            <person name="Brettin T."/>
            <person name="Bruce D."/>
            <person name="Han C."/>
            <person name="Tapia R."/>
            <person name="Gilna P."/>
            <person name="Schmutz J."/>
            <person name="Larimer F."/>
            <person name="Land M."/>
            <person name="Hauser L."/>
            <person name="Kyrpides N."/>
            <person name="Mikhailova N."/>
            <person name="Richardson P."/>
        </authorList>
    </citation>
    <scope>NUCLEOTIDE SEQUENCE [LARGE SCALE GENOMIC DNA]</scope>
    <source>
        <strain>NCIMB 400</strain>
    </source>
</reference>